<comment type="function">
    <text evidence="1">Required for maturation of 30S ribosomal subunits.</text>
</comment>
<comment type="subcellular location">
    <subcellularLocation>
        <location evidence="1">Cytoplasm</location>
    </subcellularLocation>
</comment>
<comment type="similarity">
    <text evidence="1">Belongs to the RimP family.</text>
</comment>
<name>RIMP_ECO8A</name>
<evidence type="ECO:0000255" key="1">
    <source>
        <dbReference type="HAMAP-Rule" id="MF_01077"/>
    </source>
</evidence>
<feature type="chain" id="PRO_0000384663" description="Ribosome maturation factor RimP">
    <location>
        <begin position="1"/>
        <end position="150"/>
    </location>
</feature>
<proteinExistence type="inferred from homology"/>
<accession>B7M078</accession>
<sequence>MSTLEQKLTEMITAPVEALGFELVGIEFIRGRTSTLRIYIDSEDGINVDDCADVSHQVSAVLDVEDPITVAYNLEVSSPGLDRPLFTAEHYARFVGEEVTLVLRMAVQNRRKWQGVIKAVDGEMITVTVEGKDEVFALSNIQKANLVPHF</sequence>
<organism>
    <name type="scientific">Escherichia coli O8 (strain IAI1)</name>
    <dbReference type="NCBI Taxonomy" id="585034"/>
    <lineage>
        <taxon>Bacteria</taxon>
        <taxon>Pseudomonadati</taxon>
        <taxon>Pseudomonadota</taxon>
        <taxon>Gammaproteobacteria</taxon>
        <taxon>Enterobacterales</taxon>
        <taxon>Enterobacteriaceae</taxon>
        <taxon>Escherichia</taxon>
    </lineage>
</organism>
<gene>
    <name evidence="1" type="primary">rimP</name>
    <name type="ordered locus">ECIAI1_3320</name>
</gene>
<dbReference type="EMBL" id="CU928160">
    <property type="protein sequence ID" value="CAR00134.1"/>
    <property type="molecule type" value="Genomic_DNA"/>
</dbReference>
<dbReference type="RefSeq" id="WP_001300397.1">
    <property type="nucleotide sequence ID" value="NC_011741.1"/>
</dbReference>
<dbReference type="SMR" id="B7M078"/>
<dbReference type="GeneID" id="93778813"/>
<dbReference type="KEGG" id="ecr:ECIAI1_3320"/>
<dbReference type="HOGENOM" id="CLU_070525_1_1_6"/>
<dbReference type="GO" id="GO:0005829">
    <property type="term" value="C:cytosol"/>
    <property type="evidence" value="ECO:0007669"/>
    <property type="project" value="TreeGrafter"/>
</dbReference>
<dbReference type="GO" id="GO:0000028">
    <property type="term" value="P:ribosomal small subunit assembly"/>
    <property type="evidence" value="ECO:0007669"/>
    <property type="project" value="TreeGrafter"/>
</dbReference>
<dbReference type="GO" id="GO:0006412">
    <property type="term" value="P:translation"/>
    <property type="evidence" value="ECO:0007669"/>
    <property type="project" value="TreeGrafter"/>
</dbReference>
<dbReference type="CDD" id="cd01734">
    <property type="entry name" value="YlxS_C"/>
    <property type="match status" value="1"/>
</dbReference>
<dbReference type="FunFam" id="2.30.30.180:FF:000001">
    <property type="entry name" value="Ribosome maturation factor RimP"/>
    <property type="match status" value="1"/>
</dbReference>
<dbReference type="FunFam" id="3.30.300.70:FF:000001">
    <property type="entry name" value="Ribosome maturation factor RimP"/>
    <property type="match status" value="1"/>
</dbReference>
<dbReference type="Gene3D" id="2.30.30.180">
    <property type="entry name" value="Ribosome maturation factor RimP, C-terminal domain"/>
    <property type="match status" value="1"/>
</dbReference>
<dbReference type="Gene3D" id="3.30.300.70">
    <property type="entry name" value="RimP-like superfamily, N-terminal"/>
    <property type="match status" value="1"/>
</dbReference>
<dbReference type="HAMAP" id="MF_01077">
    <property type="entry name" value="RimP"/>
    <property type="match status" value="1"/>
</dbReference>
<dbReference type="InterPro" id="IPR003728">
    <property type="entry name" value="Ribosome_maturation_RimP"/>
</dbReference>
<dbReference type="InterPro" id="IPR028998">
    <property type="entry name" value="RimP_C"/>
</dbReference>
<dbReference type="InterPro" id="IPR036847">
    <property type="entry name" value="RimP_C_sf"/>
</dbReference>
<dbReference type="InterPro" id="IPR028989">
    <property type="entry name" value="RimP_N"/>
</dbReference>
<dbReference type="InterPro" id="IPR035956">
    <property type="entry name" value="RimP_N_sf"/>
</dbReference>
<dbReference type="NCBIfam" id="NF000927">
    <property type="entry name" value="PRK00092.1-1"/>
    <property type="match status" value="1"/>
</dbReference>
<dbReference type="PANTHER" id="PTHR33867">
    <property type="entry name" value="RIBOSOME MATURATION FACTOR RIMP"/>
    <property type="match status" value="1"/>
</dbReference>
<dbReference type="PANTHER" id="PTHR33867:SF1">
    <property type="entry name" value="RIBOSOME MATURATION FACTOR RIMP"/>
    <property type="match status" value="1"/>
</dbReference>
<dbReference type="Pfam" id="PF17384">
    <property type="entry name" value="DUF150_C"/>
    <property type="match status" value="1"/>
</dbReference>
<dbReference type="Pfam" id="PF02576">
    <property type="entry name" value="RimP_N"/>
    <property type="match status" value="1"/>
</dbReference>
<dbReference type="SUPFAM" id="SSF74942">
    <property type="entry name" value="YhbC-like, C-terminal domain"/>
    <property type="match status" value="1"/>
</dbReference>
<dbReference type="SUPFAM" id="SSF75420">
    <property type="entry name" value="YhbC-like, N-terminal domain"/>
    <property type="match status" value="1"/>
</dbReference>
<keyword id="KW-0963">Cytoplasm</keyword>
<keyword id="KW-0690">Ribosome biogenesis</keyword>
<protein>
    <recommendedName>
        <fullName evidence="1">Ribosome maturation factor RimP</fullName>
    </recommendedName>
</protein>
<reference key="1">
    <citation type="journal article" date="2009" name="PLoS Genet.">
        <title>Organised genome dynamics in the Escherichia coli species results in highly diverse adaptive paths.</title>
        <authorList>
            <person name="Touchon M."/>
            <person name="Hoede C."/>
            <person name="Tenaillon O."/>
            <person name="Barbe V."/>
            <person name="Baeriswyl S."/>
            <person name="Bidet P."/>
            <person name="Bingen E."/>
            <person name="Bonacorsi S."/>
            <person name="Bouchier C."/>
            <person name="Bouvet O."/>
            <person name="Calteau A."/>
            <person name="Chiapello H."/>
            <person name="Clermont O."/>
            <person name="Cruveiller S."/>
            <person name="Danchin A."/>
            <person name="Diard M."/>
            <person name="Dossat C."/>
            <person name="Karoui M.E."/>
            <person name="Frapy E."/>
            <person name="Garry L."/>
            <person name="Ghigo J.M."/>
            <person name="Gilles A.M."/>
            <person name="Johnson J."/>
            <person name="Le Bouguenec C."/>
            <person name="Lescat M."/>
            <person name="Mangenot S."/>
            <person name="Martinez-Jehanne V."/>
            <person name="Matic I."/>
            <person name="Nassif X."/>
            <person name="Oztas S."/>
            <person name="Petit M.A."/>
            <person name="Pichon C."/>
            <person name="Rouy Z."/>
            <person name="Ruf C.S."/>
            <person name="Schneider D."/>
            <person name="Tourret J."/>
            <person name="Vacherie B."/>
            <person name="Vallenet D."/>
            <person name="Medigue C."/>
            <person name="Rocha E.P.C."/>
            <person name="Denamur E."/>
        </authorList>
    </citation>
    <scope>NUCLEOTIDE SEQUENCE [LARGE SCALE GENOMIC DNA]</scope>
    <source>
        <strain>IAI1</strain>
    </source>
</reference>